<gene>
    <name evidence="1" type="primary">ruvC</name>
    <name type="ordered locus">BR1704</name>
    <name type="ordered locus">BS1330_I1698</name>
</gene>
<comment type="function">
    <text evidence="1">The RuvA-RuvB-RuvC complex processes Holliday junction (HJ) DNA during genetic recombination and DNA repair. Endonuclease that resolves HJ intermediates. Cleaves cruciform DNA by making single-stranded nicks across the HJ at symmetrical positions within the homologous arms, yielding a 5'-phosphate and a 3'-hydroxyl group; requires a central core of homology in the junction. The consensus cleavage sequence is 5'-(A/T)TT(C/G)-3'. Cleavage occurs on the 3'-side of the TT dinucleotide at the point of strand exchange. HJ branch migration catalyzed by RuvA-RuvB allows RuvC to scan DNA until it finds its consensus sequence, where it cleaves and resolves the cruciform DNA.</text>
</comment>
<comment type="catalytic activity">
    <reaction evidence="1">
        <text>Endonucleolytic cleavage at a junction such as a reciprocal single-stranded crossover between two homologous DNA duplexes (Holliday junction).</text>
        <dbReference type="EC" id="3.1.21.10"/>
    </reaction>
</comment>
<comment type="cofactor">
    <cofactor evidence="1">
        <name>Mg(2+)</name>
        <dbReference type="ChEBI" id="CHEBI:18420"/>
    </cofactor>
    <text evidence="1">Binds 2 Mg(2+) ion per subunit.</text>
</comment>
<comment type="subunit">
    <text evidence="1">Homodimer which binds Holliday junction (HJ) DNA. The HJ becomes 2-fold symmetrical on binding to RuvC with unstacked arms; it has a different conformation from HJ DNA in complex with RuvA. In the full resolvosome a probable DNA-RuvA(4)-RuvB(12)-RuvC(2) complex forms which resolves the HJ.</text>
</comment>
<comment type="subcellular location">
    <subcellularLocation>
        <location evidence="1">Cytoplasm</location>
    </subcellularLocation>
</comment>
<comment type="similarity">
    <text evidence="1">Belongs to the RuvC family.</text>
</comment>
<organism>
    <name type="scientific">Brucella suis biovar 1 (strain 1330)</name>
    <dbReference type="NCBI Taxonomy" id="204722"/>
    <lineage>
        <taxon>Bacteria</taxon>
        <taxon>Pseudomonadati</taxon>
        <taxon>Pseudomonadota</taxon>
        <taxon>Alphaproteobacteria</taxon>
        <taxon>Hyphomicrobiales</taxon>
        <taxon>Brucellaceae</taxon>
        <taxon>Brucella/Ochrobactrum group</taxon>
        <taxon>Brucella</taxon>
    </lineage>
</organism>
<feature type="chain" id="PRO_0000183082" description="Crossover junction endodeoxyribonuclease RuvC">
    <location>
        <begin position="1"/>
        <end position="173"/>
    </location>
</feature>
<feature type="active site" evidence="1">
    <location>
        <position position="11"/>
    </location>
</feature>
<feature type="active site" evidence="1">
    <location>
        <position position="71"/>
    </location>
</feature>
<feature type="active site" evidence="1">
    <location>
        <position position="143"/>
    </location>
</feature>
<feature type="binding site" evidence="1">
    <location>
        <position position="11"/>
    </location>
    <ligand>
        <name>Mg(2+)</name>
        <dbReference type="ChEBI" id="CHEBI:18420"/>
        <label>1</label>
    </ligand>
</feature>
<feature type="binding site" evidence="1">
    <location>
        <position position="71"/>
    </location>
    <ligand>
        <name>Mg(2+)</name>
        <dbReference type="ChEBI" id="CHEBI:18420"/>
        <label>2</label>
    </ligand>
</feature>
<feature type="binding site" evidence="1">
    <location>
        <position position="143"/>
    </location>
    <ligand>
        <name>Mg(2+)</name>
        <dbReference type="ChEBI" id="CHEBI:18420"/>
        <label>1</label>
    </ligand>
</feature>
<evidence type="ECO:0000255" key="1">
    <source>
        <dbReference type="HAMAP-Rule" id="MF_00034"/>
    </source>
</evidence>
<accession>Q8FZ01</accession>
<accession>G0K6W6</accession>
<proteinExistence type="inferred from homology"/>
<protein>
    <recommendedName>
        <fullName evidence="1">Crossover junction endodeoxyribonuclease RuvC</fullName>
        <ecNumber evidence="1">3.1.21.10</ecNumber>
    </recommendedName>
    <alternativeName>
        <fullName evidence="1">Holliday junction nuclease RuvC</fullName>
    </alternativeName>
    <alternativeName>
        <fullName evidence="1">Holliday junction resolvase RuvC</fullName>
    </alternativeName>
</protein>
<name>RUVC_BRUSU</name>
<reference key="1">
    <citation type="journal article" date="2002" name="Proc. Natl. Acad. Sci. U.S.A.">
        <title>The Brucella suis genome reveals fundamental similarities between animal and plant pathogens and symbionts.</title>
        <authorList>
            <person name="Paulsen I.T."/>
            <person name="Seshadri R."/>
            <person name="Nelson K.E."/>
            <person name="Eisen J.A."/>
            <person name="Heidelberg J.F."/>
            <person name="Read T.D."/>
            <person name="Dodson R.J."/>
            <person name="Umayam L.A."/>
            <person name="Brinkac L.M."/>
            <person name="Beanan M.J."/>
            <person name="Daugherty S.C."/>
            <person name="DeBoy R.T."/>
            <person name="Durkin A.S."/>
            <person name="Kolonay J.F."/>
            <person name="Madupu R."/>
            <person name="Nelson W.C."/>
            <person name="Ayodeji B."/>
            <person name="Kraul M."/>
            <person name="Shetty J."/>
            <person name="Malek J.A."/>
            <person name="Van Aken S.E."/>
            <person name="Riedmuller S."/>
            <person name="Tettelin H."/>
            <person name="Gill S.R."/>
            <person name="White O."/>
            <person name="Salzberg S.L."/>
            <person name="Hoover D.L."/>
            <person name="Lindler L.E."/>
            <person name="Halling S.M."/>
            <person name="Boyle S.M."/>
            <person name="Fraser C.M."/>
        </authorList>
    </citation>
    <scope>NUCLEOTIDE SEQUENCE [LARGE SCALE GENOMIC DNA]</scope>
    <source>
        <strain>1330</strain>
    </source>
</reference>
<reference key="2">
    <citation type="journal article" date="2011" name="J. Bacteriol.">
        <title>Revised genome sequence of Brucella suis 1330.</title>
        <authorList>
            <person name="Tae H."/>
            <person name="Shallom S."/>
            <person name="Settlage R."/>
            <person name="Preston D."/>
            <person name="Adams L.G."/>
            <person name="Garner H.R."/>
        </authorList>
    </citation>
    <scope>NUCLEOTIDE SEQUENCE [LARGE SCALE GENOMIC DNA]</scope>
    <source>
        <strain>1330</strain>
    </source>
</reference>
<sequence>MKETIRIIGIDPGLLRTGWGIVESLGNSLHFIGSGTVTSNAEMDLASRLCQLHEGLSKVLHEFMPHEAAVEHTFVNKDATATLKLGQARGIALLAPAQAGLPVAEYAPNAVKKAVIGVGHGEKQQIHMMVKVLMPRASFDTSDAADALAIAICHAHHRQSIVSARRMQALLAG</sequence>
<dbReference type="EC" id="3.1.21.10" evidence="1"/>
<dbReference type="EMBL" id="AE014291">
    <property type="protein sequence ID" value="AAN30604.1"/>
    <property type="molecule type" value="Genomic_DNA"/>
</dbReference>
<dbReference type="EMBL" id="CP002997">
    <property type="protein sequence ID" value="AEM19021.1"/>
    <property type="molecule type" value="Genomic_DNA"/>
</dbReference>
<dbReference type="RefSeq" id="WP_006192498.1">
    <property type="nucleotide sequence ID" value="NZ_KN046804.1"/>
</dbReference>
<dbReference type="SMR" id="Q8FZ01"/>
<dbReference type="GeneID" id="45052681"/>
<dbReference type="KEGG" id="bms:BR1704"/>
<dbReference type="KEGG" id="bsi:BS1330_I1698"/>
<dbReference type="PATRIC" id="fig|204722.22.peg.150"/>
<dbReference type="HOGENOM" id="CLU_091257_1_0_5"/>
<dbReference type="PhylomeDB" id="Q8FZ01"/>
<dbReference type="Proteomes" id="UP000007104">
    <property type="component" value="Chromosome I"/>
</dbReference>
<dbReference type="GO" id="GO:0005737">
    <property type="term" value="C:cytoplasm"/>
    <property type="evidence" value="ECO:0007669"/>
    <property type="project" value="UniProtKB-SubCell"/>
</dbReference>
<dbReference type="GO" id="GO:0048476">
    <property type="term" value="C:Holliday junction resolvase complex"/>
    <property type="evidence" value="ECO:0007669"/>
    <property type="project" value="UniProtKB-UniRule"/>
</dbReference>
<dbReference type="GO" id="GO:0008821">
    <property type="term" value="F:crossover junction DNA endonuclease activity"/>
    <property type="evidence" value="ECO:0007669"/>
    <property type="project" value="UniProtKB-UniRule"/>
</dbReference>
<dbReference type="GO" id="GO:0003677">
    <property type="term" value="F:DNA binding"/>
    <property type="evidence" value="ECO:0007669"/>
    <property type="project" value="UniProtKB-KW"/>
</dbReference>
<dbReference type="GO" id="GO:0000287">
    <property type="term" value="F:magnesium ion binding"/>
    <property type="evidence" value="ECO:0007669"/>
    <property type="project" value="UniProtKB-UniRule"/>
</dbReference>
<dbReference type="GO" id="GO:0006310">
    <property type="term" value="P:DNA recombination"/>
    <property type="evidence" value="ECO:0007669"/>
    <property type="project" value="UniProtKB-UniRule"/>
</dbReference>
<dbReference type="GO" id="GO:0006281">
    <property type="term" value="P:DNA repair"/>
    <property type="evidence" value="ECO:0007669"/>
    <property type="project" value="UniProtKB-UniRule"/>
</dbReference>
<dbReference type="CDD" id="cd16962">
    <property type="entry name" value="RuvC"/>
    <property type="match status" value="1"/>
</dbReference>
<dbReference type="FunFam" id="3.30.420.10:FF:000002">
    <property type="entry name" value="Crossover junction endodeoxyribonuclease RuvC"/>
    <property type="match status" value="1"/>
</dbReference>
<dbReference type="Gene3D" id="3.30.420.10">
    <property type="entry name" value="Ribonuclease H-like superfamily/Ribonuclease H"/>
    <property type="match status" value="1"/>
</dbReference>
<dbReference type="HAMAP" id="MF_00034">
    <property type="entry name" value="RuvC"/>
    <property type="match status" value="1"/>
</dbReference>
<dbReference type="InterPro" id="IPR012337">
    <property type="entry name" value="RNaseH-like_sf"/>
</dbReference>
<dbReference type="InterPro" id="IPR036397">
    <property type="entry name" value="RNaseH_sf"/>
</dbReference>
<dbReference type="InterPro" id="IPR020563">
    <property type="entry name" value="X-over_junc_endoDNase_Mg_BS"/>
</dbReference>
<dbReference type="InterPro" id="IPR002176">
    <property type="entry name" value="X-over_junc_endoDNase_RuvC"/>
</dbReference>
<dbReference type="NCBIfam" id="TIGR00228">
    <property type="entry name" value="ruvC"/>
    <property type="match status" value="1"/>
</dbReference>
<dbReference type="PANTHER" id="PTHR30194">
    <property type="entry name" value="CROSSOVER JUNCTION ENDODEOXYRIBONUCLEASE RUVC"/>
    <property type="match status" value="1"/>
</dbReference>
<dbReference type="PANTHER" id="PTHR30194:SF3">
    <property type="entry name" value="CROSSOVER JUNCTION ENDODEOXYRIBONUCLEASE RUVC"/>
    <property type="match status" value="1"/>
</dbReference>
<dbReference type="Pfam" id="PF02075">
    <property type="entry name" value="RuvC"/>
    <property type="match status" value="1"/>
</dbReference>
<dbReference type="PRINTS" id="PR00696">
    <property type="entry name" value="RSOLVASERUVC"/>
</dbReference>
<dbReference type="SUPFAM" id="SSF53098">
    <property type="entry name" value="Ribonuclease H-like"/>
    <property type="match status" value="1"/>
</dbReference>
<dbReference type="PROSITE" id="PS01321">
    <property type="entry name" value="RUVC"/>
    <property type="match status" value="1"/>
</dbReference>
<keyword id="KW-0963">Cytoplasm</keyword>
<keyword id="KW-0227">DNA damage</keyword>
<keyword id="KW-0233">DNA recombination</keyword>
<keyword id="KW-0234">DNA repair</keyword>
<keyword id="KW-0238">DNA-binding</keyword>
<keyword id="KW-0255">Endonuclease</keyword>
<keyword id="KW-0378">Hydrolase</keyword>
<keyword id="KW-0460">Magnesium</keyword>
<keyword id="KW-0479">Metal-binding</keyword>
<keyword id="KW-0540">Nuclease</keyword>